<accession>P83645</accession>
<dbReference type="EC" id="1.11.1.9" evidence="3"/>
<dbReference type="EC" id="1.11.1.12" evidence="2"/>
<dbReference type="EMBL" id="BG664050">
    <property type="status" value="NOT_ANNOTATED_CDS"/>
    <property type="molecule type" value="mRNA"/>
</dbReference>
<dbReference type="EMBL" id="BQ196649">
    <property type="status" value="NOT_ANNOTATED_CDS"/>
    <property type="molecule type" value="mRNA"/>
</dbReference>
<dbReference type="FunCoup" id="P83645">
    <property type="interactions" value="1"/>
</dbReference>
<dbReference type="STRING" id="10116.ENSRNOP00000072136"/>
<dbReference type="PeroxiBase" id="3731">
    <property type="entry name" value="RnoGPx02"/>
</dbReference>
<dbReference type="iPTMnet" id="P83645"/>
<dbReference type="PhosphoSitePlus" id="P83645"/>
<dbReference type="UCSC" id="RGD:727780">
    <property type="organism name" value="rat"/>
</dbReference>
<dbReference type="AGR" id="RGD:727780"/>
<dbReference type="RGD" id="727780">
    <property type="gene designation" value="Gpx2"/>
</dbReference>
<dbReference type="InParanoid" id="P83645"/>
<dbReference type="PhylomeDB" id="P83645"/>
<dbReference type="BRENDA" id="1.11.1.9">
    <property type="organism ID" value="5301"/>
</dbReference>
<dbReference type="Reactome" id="R-RNO-2142712">
    <property type="pathway name" value="Synthesis of 12-eicosatetraenoic acid derivatives"/>
</dbReference>
<dbReference type="Reactome" id="R-RNO-2142770">
    <property type="pathway name" value="Synthesis of 15-eicosatetraenoic acid derivatives"/>
</dbReference>
<dbReference type="Reactome" id="R-RNO-3299685">
    <property type="pathway name" value="Detoxification of Reactive Oxygen Species"/>
</dbReference>
<dbReference type="Reactome" id="R-RNO-5628897">
    <property type="pathway name" value="TP53 Regulates Metabolic Genes"/>
</dbReference>
<dbReference type="PRO" id="PR:P83645"/>
<dbReference type="Proteomes" id="UP000002494">
    <property type="component" value="Unplaced"/>
</dbReference>
<dbReference type="GO" id="GO:0005829">
    <property type="term" value="C:cytosol"/>
    <property type="evidence" value="ECO:0007669"/>
    <property type="project" value="UniProtKB-SubCell"/>
</dbReference>
<dbReference type="GO" id="GO:0004602">
    <property type="term" value="F:glutathione peroxidase activity"/>
    <property type="evidence" value="ECO:0000314"/>
    <property type="project" value="RGD"/>
</dbReference>
<dbReference type="GO" id="GO:0047066">
    <property type="term" value="F:phospholipid-hydroperoxide glutathione peroxidase activity"/>
    <property type="evidence" value="ECO:0000266"/>
    <property type="project" value="RGD"/>
</dbReference>
<dbReference type="GO" id="GO:0051702">
    <property type="term" value="P:biological process involved in interaction with symbiont"/>
    <property type="evidence" value="ECO:0000266"/>
    <property type="project" value="RGD"/>
</dbReference>
<dbReference type="GO" id="GO:0002862">
    <property type="term" value="P:negative regulation of inflammatory response to antigenic stimulus"/>
    <property type="evidence" value="ECO:0000266"/>
    <property type="project" value="RGD"/>
</dbReference>
<dbReference type="GO" id="GO:0006979">
    <property type="term" value="P:response to oxidative stress"/>
    <property type="evidence" value="ECO:0007669"/>
    <property type="project" value="InterPro"/>
</dbReference>
<dbReference type="GO" id="GO:0009751">
    <property type="term" value="P:response to salicylic acid"/>
    <property type="evidence" value="ECO:0000270"/>
    <property type="project" value="RGD"/>
</dbReference>
<dbReference type="GO" id="GO:0010269">
    <property type="term" value="P:response to selenium ion"/>
    <property type="evidence" value="ECO:0000270"/>
    <property type="project" value="RGD"/>
</dbReference>
<dbReference type="GO" id="GO:0009609">
    <property type="term" value="P:response to symbiotic bacterium"/>
    <property type="evidence" value="ECO:0000266"/>
    <property type="project" value="RGD"/>
</dbReference>
<dbReference type="GO" id="GO:0001659">
    <property type="term" value="P:temperature homeostasis"/>
    <property type="evidence" value="ECO:0000266"/>
    <property type="project" value="RGD"/>
</dbReference>
<dbReference type="CDD" id="cd00340">
    <property type="entry name" value="GSH_Peroxidase"/>
    <property type="match status" value="1"/>
</dbReference>
<dbReference type="FunFam" id="3.40.30.10:FF:000153">
    <property type="entry name" value="Glutathione peroxidase"/>
    <property type="match status" value="1"/>
</dbReference>
<dbReference type="Gene3D" id="3.40.30.10">
    <property type="entry name" value="Glutaredoxin"/>
    <property type="match status" value="1"/>
</dbReference>
<dbReference type="InterPro" id="IPR000889">
    <property type="entry name" value="Glutathione_peroxidase"/>
</dbReference>
<dbReference type="InterPro" id="IPR029759">
    <property type="entry name" value="GPX_AS"/>
</dbReference>
<dbReference type="InterPro" id="IPR029760">
    <property type="entry name" value="GPX_CS"/>
</dbReference>
<dbReference type="InterPro" id="IPR036249">
    <property type="entry name" value="Thioredoxin-like_sf"/>
</dbReference>
<dbReference type="PANTHER" id="PTHR11592">
    <property type="entry name" value="GLUTATHIONE PEROXIDASE"/>
    <property type="match status" value="1"/>
</dbReference>
<dbReference type="PANTHER" id="PTHR11592:SF36">
    <property type="entry name" value="GLUTATHIONE PEROXIDASE 2"/>
    <property type="match status" value="1"/>
</dbReference>
<dbReference type="Pfam" id="PF00255">
    <property type="entry name" value="GSHPx"/>
    <property type="match status" value="1"/>
</dbReference>
<dbReference type="PIRSF" id="PIRSF000303">
    <property type="entry name" value="Glutathion_perox"/>
    <property type="match status" value="1"/>
</dbReference>
<dbReference type="PRINTS" id="PR01011">
    <property type="entry name" value="GLUTPROXDASE"/>
</dbReference>
<dbReference type="SUPFAM" id="SSF52833">
    <property type="entry name" value="Thioredoxin-like"/>
    <property type="match status" value="1"/>
</dbReference>
<dbReference type="PROSITE" id="PS00460">
    <property type="entry name" value="GLUTATHIONE_PEROXID_1"/>
    <property type="match status" value="1"/>
</dbReference>
<dbReference type="PROSITE" id="PS00763">
    <property type="entry name" value="GLUTATHIONE_PEROXID_2"/>
    <property type="match status" value="1"/>
</dbReference>
<dbReference type="PROSITE" id="PS51355">
    <property type="entry name" value="GLUTATHIONE_PEROXID_3"/>
    <property type="match status" value="1"/>
</dbReference>
<gene>
    <name type="primary">Gpx2</name>
</gene>
<evidence type="ECO:0000250" key="1">
    <source>
        <dbReference type="UniProtKB" id="O70325"/>
    </source>
</evidence>
<evidence type="ECO:0000250" key="2">
    <source>
        <dbReference type="UniProtKB" id="P18283"/>
    </source>
</evidence>
<evidence type="ECO:0000269" key="3">
    <source>
    </source>
</evidence>
<evidence type="ECO:0000305" key="4"/>
<evidence type="ECO:0000305" key="5">
    <source>
    </source>
</evidence>
<reference key="1">
    <citation type="submission" date="2001-05" db="EMBL/GenBank/DDBJ databases">
        <title>Distinct gene expression profiles of rat dorsal root ganglion induced by peripheral nerve axotomy.</title>
        <authorList>
            <person name="Xiao H.S."/>
            <person name="Han Z.G."/>
            <person name="Zhang F.X."/>
            <person name="Huang Q.H."/>
            <person name="Lu Y.J."/>
            <person name="Bao L."/>
            <person name="Fu G."/>
            <person name="Guo C."/>
            <person name="Yan Q."/>
            <person name="Jin S.X."/>
            <person name="Zhu Z.D."/>
            <person name="Xu X.R."/>
            <person name="Li N.G."/>
            <person name="Chen Z."/>
            <person name="Zhang X."/>
        </authorList>
    </citation>
    <scope>NUCLEOTIDE SEQUENCE [MRNA] OF 1-87</scope>
    <source>
        <strain>Sprague-Dawley</strain>
        <tissue>Spinal ganglion</tissue>
    </source>
</reference>
<reference key="2">
    <citation type="journal article" date="1996" name="Genome Res.">
        <title>Normalization and subtraction: two approaches to facilitate gene discovery.</title>
        <authorList>
            <person name="Bonaldo M.F."/>
            <person name="Lennon G."/>
            <person name="Soares M.B."/>
        </authorList>
    </citation>
    <scope>NUCLEOTIDE SEQUENCE [LARGE SCALE MRNA] OF 80-190</scope>
    <source>
        <strain>Sprague-Dawley</strain>
        <tissue>Ileum</tissue>
    </source>
</reference>
<reference evidence="4" key="3">
    <citation type="journal article" date="1998" name="Biochim. Biophys. Acta">
        <title>Selenium-dependent glutathione peroxidase-GI is a major glutathione peroxidase activity in the mucosal epithelium of rodent intestine.</title>
        <authorList>
            <person name="Esworthy R.S."/>
            <person name="Swiderek K.M."/>
            <person name="Ho Y.-S."/>
            <person name="Chu F.-F."/>
        </authorList>
    </citation>
    <scope>PROTEIN SEQUENCE OF 7-27; 91-101; 121-138; 140-168 AND 175-181</scope>
    <scope>CATALYTIC ACTIVITY</scope>
    <scope>TISSUE SPECIFICITY</scope>
    <scope>FUNCTION</scope>
    <source>
        <strain evidence="3">CD Charles River</strain>
        <tissue evidence="3">Gastrointestinal tract epithelium</tissue>
    </source>
</reference>
<reference key="4">
    <citation type="journal article" date="2012" name="Nat. Commun.">
        <title>Quantitative maps of protein phosphorylation sites across 14 different rat organs and tissues.</title>
        <authorList>
            <person name="Lundby A."/>
            <person name="Secher A."/>
            <person name="Lage K."/>
            <person name="Nordsborg N.B."/>
            <person name="Dmytriyev A."/>
            <person name="Lundby C."/>
            <person name="Olsen J.V."/>
        </authorList>
    </citation>
    <scope>IDENTIFICATION BY MASS SPECTROMETRY [LARGE SCALE ANALYSIS]</scope>
</reference>
<organism evidence="4">
    <name type="scientific">Rattus norvegicus</name>
    <name type="common">Rat</name>
    <dbReference type="NCBI Taxonomy" id="10116"/>
    <lineage>
        <taxon>Eukaryota</taxon>
        <taxon>Metazoa</taxon>
        <taxon>Chordata</taxon>
        <taxon>Craniata</taxon>
        <taxon>Vertebrata</taxon>
        <taxon>Euteleostomi</taxon>
        <taxon>Mammalia</taxon>
        <taxon>Eutheria</taxon>
        <taxon>Euarchontoglires</taxon>
        <taxon>Glires</taxon>
        <taxon>Rodentia</taxon>
        <taxon>Myomorpha</taxon>
        <taxon>Muroidea</taxon>
        <taxon>Muridae</taxon>
        <taxon>Murinae</taxon>
        <taxon>Rattus</taxon>
    </lineage>
</organism>
<name>GPX2_RAT</name>
<proteinExistence type="evidence at protein level"/>
<protein>
    <recommendedName>
        <fullName>Glutathione peroxidase 2</fullName>
        <shortName>GPx-2</shortName>
        <shortName>GSHPx-2</shortName>
        <ecNumber evidence="3">1.11.1.9</ecNumber>
    </recommendedName>
    <alternativeName>
        <fullName>Glutathione peroxidase-gastrointestinal</fullName>
        <shortName>GPx-GI</shortName>
        <shortName>GSHPx-GI</shortName>
    </alternativeName>
    <alternativeName>
        <fullName>Phospholipid hydroperoxide glutathione peroxidase GPX2</fullName>
        <ecNumber evidence="2">1.11.1.12</ecNumber>
    </alternativeName>
</protein>
<comment type="function">
    <text evidence="2 3">Catalyzes the reduction of hydroperoxides in a glutathione-dependent manner thus regulating cellular redox homeostasis (PubMed:9685647). Can reduce small soluble hydroperoxide such as H2O2 (PubMed:9685647). Can reduce cumene hydroperoxide and tert-butyl hydroperoxide, as well as several fatty acid-derived hydroperoxides. Cannot reduce phosphatidycholine hydroperoxide (By similarity).</text>
</comment>
<comment type="catalytic activity">
    <reaction evidence="3">
        <text>2 glutathione + H2O2 = glutathione disulfide + 2 H2O</text>
        <dbReference type="Rhea" id="RHEA:16833"/>
        <dbReference type="ChEBI" id="CHEBI:15377"/>
        <dbReference type="ChEBI" id="CHEBI:16240"/>
        <dbReference type="ChEBI" id="CHEBI:57925"/>
        <dbReference type="ChEBI" id="CHEBI:58297"/>
        <dbReference type="EC" id="1.11.1.9"/>
    </reaction>
    <physiologicalReaction direction="left-to-right" evidence="5">
        <dbReference type="Rhea" id="RHEA:16834"/>
    </physiologicalReaction>
</comment>
<comment type="catalytic activity">
    <reaction evidence="2">
        <text>a hydroperoxy polyunsaturated fatty acid + 2 glutathione = a hydroxy polyunsaturated fatty acid + glutathione disulfide + H2O</text>
        <dbReference type="Rhea" id="RHEA:19057"/>
        <dbReference type="ChEBI" id="CHEBI:15377"/>
        <dbReference type="ChEBI" id="CHEBI:57925"/>
        <dbReference type="ChEBI" id="CHEBI:58297"/>
        <dbReference type="ChEBI" id="CHEBI:131871"/>
        <dbReference type="ChEBI" id="CHEBI:134019"/>
        <dbReference type="EC" id="1.11.1.12"/>
    </reaction>
    <physiologicalReaction direction="left-to-right" evidence="2">
        <dbReference type="Rhea" id="RHEA:19058"/>
    </physiologicalReaction>
</comment>
<comment type="catalytic activity">
    <reaction evidence="2">
        <text>tert-butyl hydroperoxide + 2 glutathione = tert-butanol + glutathione disulfide + H2O</text>
        <dbReference type="Rhea" id="RHEA:69412"/>
        <dbReference type="ChEBI" id="CHEBI:15377"/>
        <dbReference type="ChEBI" id="CHEBI:45895"/>
        <dbReference type="ChEBI" id="CHEBI:57925"/>
        <dbReference type="ChEBI" id="CHEBI:58297"/>
        <dbReference type="ChEBI" id="CHEBI:64090"/>
    </reaction>
    <physiologicalReaction direction="left-to-right" evidence="2">
        <dbReference type="Rhea" id="RHEA:69413"/>
    </physiologicalReaction>
</comment>
<comment type="catalytic activity">
    <reaction evidence="2">
        <text>cumene hydroperoxide + 2 glutathione = 2-phenylpropan-2-ol + glutathione disulfide + H2O</text>
        <dbReference type="Rhea" id="RHEA:69651"/>
        <dbReference type="ChEBI" id="CHEBI:15377"/>
        <dbReference type="ChEBI" id="CHEBI:57925"/>
        <dbReference type="ChEBI" id="CHEBI:58297"/>
        <dbReference type="ChEBI" id="CHEBI:78673"/>
        <dbReference type="ChEBI" id="CHEBI:131607"/>
    </reaction>
    <physiologicalReaction direction="left-to-right" evidence="2">
        <dbReference type="Rhea" id="RHEA:69652"/>
    </physiologicalReaction>
</comment>
<comment type="catalytic activity">
    <reaction evidence="2">
        <text>(13S)-hydroperoxy-(9Z,11E)-octadecadienoate + 2 glutathione = (13S)-hydroxy-(9Z,11E)-octadecadienoate + glutathione disulfide + H2O</text>
        <dbReference type="Rhea" id="RHEA:48888"/>
        <dbReference type="ChEBI" id="CHEBI:15377"/>
        <dbReference type="ChEBI" id="CHEBI:57466"/>
        <dbReference type="ChEBI" id="CHEBI:57925"/>
        <dbReference type="ChEBI" id="CHEBI:58297"/>
        <dbReference type="ChEBI" id="CHEBI:90850"/>
    </reaction>
    <physiologicalReaction direction="left-to-right" evidence="2">
        <dbReference type="Rhea" id="RHEA:48889"/>
    </physiologicalReaction>
</comment>
<comment type="catalytic activity">
    <reaction evidence="2">
        <text>(5S)-hydroperoxy-(6E,8Z,11Z,14Z)-eicosatetraenoate + 2 glutathione = (5S)-hydroxy-(6E,8Z,11Z,14Z)-eicosatetraenoate + glutathione disulfide + H2O</text>
        <dbReference type="Rhea" id="RHEA:48620"/>
        <dbReference type="ChEBI" id="CHEBI:15377"/>
        <dbReference type="ChEBI" id="CHEBI:57450"/>
        <dbReference type="ChEBI" id="CHEBI:57925"/>
        <dbReference type="ChEBI" id="CHEBI:58297"/>
        <dbReference type="ChEBI" id="CHEBI:90632"/>
    </reaction>
    <physiologicalReaction direction="left-to-right" evidence="2">
        <dbReference type="Rhea" id="RHEA:48621"/>
    </physiologicalReaction>
</comment>
<comment type="catalytic activity">
    <reaction evidence="2">
        <text>(12R)-hydroperoxy-(5Z,8Z,10E,14Z)-eicosatetraenoate + 2 glutathione = (12R)-hydroxy-(5Z,8Z,10E,14Z)-eicosatetraenoate + glutathione disulfide + H2O</text>
        <dbReference type="Rhea" id="RHEA:76691"/>
        <dbReference type="ChEBI" id="CHEBI:15377"/>
        <dbReference type="ChEBI" id="CHEBI:57925"/>
        <dbReference type="ChEBI" id="CHEBI:58297"/>
        <dbReference type="ChEBI" id="CHEBI:75230"/>
        <dbReference type="ChEBI" id="CHEBI:83343"/>
    </reaction>
    <physiologicalReaction direction="left-to-right" evidence="2">
        <dbReference type="Rhea" id="RHEA:76692"/>
    </physiologicalReaction>
</comment>
<comment type="catalytic activity">
    <reaction evidence="2">
        <text>(15S)-hydroperoxy-(5Z,8Z,11Z,13E)-eicosatetraenoate + 2 glutathione = (15S)-hydroxy-(5Z,8Z,11Z,13E)-eicosatetraenoate + glutathione disulfide + H2O</text>
        <dbReference type="Rhea" id="RHEA:76695"/>
        <dbReference type="ChEBI" id="CHEBI:15377"/>
        <dbReference type="ChEBI" id="CHEBI:57409"/>
        <dbReference type="ChEBI" id="CHEBI:57446"/>
        <dbReference type="ChEBI" id="CHEBI:57925"/>
        <dbReference type="ChEBI" id="CHEBI:58297"/>
    </reaction>
    <physiologicalReaction direction="left-to-right" evidence="2">
        <dbReference type="Rhea" id="RHEA:76696"/>
    </physiologicalReaction>
</comment>
<comment type="subunit">
    <text evidence="2">Homotetramer.</text>
</comment>
<comment type="subcellular location">
    <subcellularLocation>
        <location evidence="2">Cytoplasm</location>
        <location evidence="2">Cytosol</location>
    </subcellularLocation>
</comment>
<comment type="tissue specificity">
    <text evidence="3">Mucosal epithelium of the gastrointestinal tract.</text>
</comment>
<comment type="similarity">
    <text evidence="4">Belongs to the glutathione peroxidase family.</text>
</comment>
<keyword id="KW-0963">Cytoplasm</keyword>
<keyword id="KW-0903">Direct protein sequencing</keyword>
<keyword id="KW-0560">Oxidoreductase</keyword>
<keyword id="KW-0575">Peroxidase</keyword>
<keyword id="KW-1185">Reference proteome</keyword>
<keyword id="KW-0712">Selenocysteine</keyword>
<feature type="chain" id="PRO_0000066624" description="Glutathione peroxidase 2">
    <location>
        <begin position="1"/>
        <end position="190"/>
    </location>
</feature>
<feature type="active site" evidence="1">
    <location>
        <position position="40"/>
    </location>
</feature>
<feature type="non-standard amino acid" description="Selenocysteine" evidence="1">
    <location>
        <position position="40"/>
    </location>
</feature>
<feature type="sequence conflict" description="In Ref. 3; AA sequence." evidence="4" ref="3">
    <original>H</original>
    <variation>P</variation>
    <location>
        <position position="91"/>
    </location>
</feature>
<sequence length="190" mass="22014">MAYIAKSFYDLSAIGLDGEKIDFNTFRGRAVLIENVASLUGTTTRDYTQLNELQCRFPRRLVVLGFPCNQFGHQENCQNEEILNSLKYVRHGGGFQPTFSLTQKCDVNGQNQHPVFAYLKDKLPYPYDDPFSLMTDPKLIIWSPVRRSDVSWNFEKFLIGPEGEPFRRYSRTFQTINIEPDIKRLLKVAI</sequence>